<name>NAA35_PONAB</name>
<sequence length="725" mass="83639">MVMKASVDDDDSGWELSMPEKMEKSNTNWVDITQDFEEACRELKLGELLHDKLFGLFEAMSAIEMMDPKMDAGMIGNQVNRKVLNFEQAIKDGTIKIKDLTLPELIGIMDTCFCCLITWLEGHSLAQTVFTCLYIHNPDFIEDPAMKAFALGILKICDIAREKVNKAAVFEEEDFQSMTYGFKMANSVTDLRVTGMLKDVEDDMQRRVKSTRSRQGEERDPEVELEHQQCLAVFSRVKFTRVLLTVLIAFTKKETSAVAEAQKLMVQAADLLSAIHNSLHHGIQAQNDTTKGDHPIMMGFEPLVNQRLLPPTFPRYAKIIKREEMVNYFARLIDRIKTVCEVVNLTNLHCILDFFCEFSEQSPCVLSRSLLQTTFLVDNKKVFGTHLMQDMVKDALRSFVSPPVLSPKCYLYNNHQAKDCIDSFVTHCVRPFCSLIQIHGHNRARQRDKLGHILEEFATLQDEAEKVDAALHTMLLKQEPQRQHLACLGTWVLYHNLRIMIQYLLSGFELELYSMHEYYYIYWYLSEFLYAWLMSTLSRADGSQMAEERIMEEQQKGRSSKKTKKKKKVRPLSREITMSQAYQNMCAGMFKTMVAFDMDGKVRKPKFELDSEQVRYEHRFAPFNSVMTPPPVHYLQFKEMSDLNKYSPPPQSPELYVAASKHFQQAKMILENIPNPDHEVNRILKVAKPNFVVMKLLAGGHKKESKVPPEFDFSAHKYFPVVKLV</sequence>
<accession>Q5RBT3</accession>
<gene>
    <name type="primary">NAA35</name>
    <name type="synonym">MAK10</name>
</gene>
<feature type="chain" id="PRO_0000308617" description="N-alpha-acetyltransferase 35, NatC auxiliary subunit">
    <location>
        <begin position="1"/>
        <end position="725"/>
    </location>
</feature>
<feature type="region of interest" description="Disordered" evidence="2">
    <location>
        <begin position="548"/>
        <end position="573"/>
    </location>
</feature>
<feature type="compositionally biased region" description="Basic residues" evidence="2">
    <location>
        <begin position="558"/>
        <end position="571"/>
    </location>
</feature>
<feature type="modified residue" description="Phosphoserine" evidence="1">
    <location>
        <position position="187"/>
    </location>
</feature>
<dbReference type="EMBL" id="CR858550">
    <property type="protein sequence ID" value="CAH90777.1"/>
    <property type="molecule type" value="mRNA"/>
</dbReference>
<dbReference type="RefSeq" id="NP_001125437.1">
    <property type="nucleotide sequence ID" value="NM_001131965.2"/>
</dbReference>
<dbReference type="RefSeq" id="XP_024107487.1">
    <property type="nucleotide sequence ID" value="XM_024251719.3"/>
</dbReference>
<dbReference type="RefSeq" id="XP_024107488.1">
    <property type="nucleotide sequence ID" value="XM_024251720.3"/>
</dbReference>
<dbReference type="SMR" id="Q5RBT3"/>
<dbReference type="FunCoup" id="Q5RBT3">
    <property type="interactions" value="3922"/>
</dbReference>
<dbReference type="STRING" id="9601.ENSPPYP00000021667"/>
<dbReference type="Ensembl" id="ENSPPYT00000022555.3">
    <property type="protein sequence ID" value="ENSPPYP00000021668.3"/>
    <property type="gene ID" value="ENSPPYG00000019336.3"/>
</dbReference>
<dbReference type="GeneID" id="100172345"/>
<dbReference type="KEGG" id="pon:100172345"/>
<dbReference type="CTD" id="60560"/>
<dbReference type="eggNOG" id="KOG2343">
    <property type="taxonomic scope" value="Eukaryota"/>
</dbReference>
<dbReference type="GeneTree" id="ENSGT00390000002445"/>
<dbReference type="InParanoid" id="Q5RBT3"/>
<dbReference type="OMA" id="QMEWIVQ"/>
<dbReference type="OrthoDB" id="269405at2759"/>
<dbReference type="Proteomes" id="UP000001595">
    <property type="component" value="Chromosome 9"/>
</dbReference>
<dbReference type="GO" id="GO:0005737">
    <property type="term" value="C:cytoplasm"/>
    <property type="evidence" value="ECO:0000250"/>
    <property type="project" value="UniProtKB"/>
</dbReference>
<dbReference type="GO" id="GO:0005829">
    <property type="term" value="C:cytosol"/>
    <property type="evidence" value="ECO:0007669"/>
    <property type="project" value="Ensembl"/>
</dbReference>
<dbReference type="GO" id="GO:0031417">
    <property type="term" value="C:NatC complex"/>
    <property type="evidence" value="ECO:0000250"/>
    <property type="project" value="UniProtKB"/>
</dbReference>
<dbReference type="GO" id="GO:0005654">
    <property type="term" value="C:nucleoplasm"/>
    <property type="evidence" value="ECO:0007669"/>
    <property type="project" value="Ensembl"/>
</dbReference>
<dbReference type="GO" id="GO:0005886">
    <property type="term" value="C:plasma membrane"/>
    <property type="evidence" value="ECO:0007669"/>
    <property type="project" value="Ensembl"/>
</dbReference>
<dbReference type="GO" id="GO:0043066">
    <property type="term" value="P:negative regulation of apoptotic process"/>
    <property type="evidence" value="ECO:0000250"/>
    <property type="project" value="UniProtKB"/>
</dbReference>
<dbReference type="GO" id="GO:0048659">
    <property type="term" value="P:smooth muscle cell proliferation"/>
    <property type="evidence" value="ECO:0000250"/>
    <property type="project" value="UniProtKB"/>
</dbReference>
<dbReference type="InterPro" id="IPR007244">
    <property type="entry name" value="Naa35/Mak10"/>
</dbReference>
<dbReference type="PANTHER" id="PTHR21373">
    <property type="entry name" value="GLUCOSE REPRESSIBLE PROTEIN MAK10"/>
    <property type="match status" value="1"/>
</dbReference>
<dbReference type="PANTHER" id="PTHR21373:SF0">
    <property type="entry name" value="N-ALPHA-ACETYLTRANSFERASE 35, NATC AUXILIARY SUBUNIT"/>
    <property type="match status" value="1"/>
</dbReference>
<dbReference type="Pfam" id="PF04112">
    <property type="entry name" value="Mak10"/>
    <property type="match status" value="2"/>
</dbReference>
<comment type="function">
    <text evidence="1">Auxillary component of the N-terminal acetyltransferase C (NatC) complex which catalyzes acetylation of N-terminal methionine residues. N-terminal acetylation protects proteins from ubiquitination and degradation by the N-end rule pathway. Involved in regulation of apoptosis and proliferation of smooth muscle cells.</text>
</comment>
<comment type="subunit">
    <text evidence="1">Component of the N-terminal acetyltransferase C (NatC) complex, which is composed of NAA35, NAA38 and NAA30.</text>
</comment>
<comment type="subcellular location">
    <subcellularLocation>
        <location evidence="1">Cytoplasm</location>
    </subcellularLocation>
</comment>
<comment type="similarity">
    <text evidence="3">Belongs to the MAK10 family.</text>
</comment>
<protein>
    <recommendedName>
        <fullName>N-alpha-acetyltransferase 35, NatC auxiliary subunit</fullName>
    </recommendedName>
    <alternativeName>
        <fullName>Protein MAK10 homolog</fullName>
    </alternativeName>
</protein>
<keyword id="KW-0963">Cytoplasm</keyword>
<keyword id="KW-0597">Phosphoprotein</keyword>
<keyword id="KW-1185">Reference proteome</keyword>
<proteinExistence type="evidence at transcript level"/>
<evidence type="ECO:0000250" key="1">
    <source>
        <dbReference type="UniProtKB" id="Q5VZE5"/>
    </source>
</evidence>
<evidence type="ECO:0000256" key="2">
    <source>
        <dbReference type="SAM" id="MobiDB-lite"/>
    </source>
</evidence>
<evidence type="ECO:0000305" key="3"/>
<organism>
    <name type="scientific">Pongo abelii</name>
    <name type="common">Sumatran orangutan</name>
    <name type="synonym">Pongo pygmaeus abelii</name>
    <dbReference type="NCBI Taxonomy" id="9601"/>
    <lineage>
        <taxon>Eukaryota</taxon>
        <taxon>Metazoa</taxon>
        <taxon>Chordata</taxon>
        <taxon>Craniata</taxon>
        <taxon>Vertebrata</taxon>
        <taxon>Euteleostomi</taxon>
        <taxon>Mammalia</taxon>
        <taxon>Eutheria</taxon>
        <taxon>Euarchontoglires</taxon>
        <taxon>Primates</taxon>
        <taxon>Haplorrhini</taxon>
        <taxon>Catarrhini</taxon>
        <taxon>Hominidae</taxon>
        <taxon>Pongo</taxon>
    </lineage>
</organism>
<reference key="1">
    <citation type="submission" date="2004-11" db="EMBL/GenBank/DDBJ databases">
        <authorList>
            <consortium name="The German cDNA consortium"/>
        </authorList>
    </citation>
    <scope>NUCLEOTIDE SEQUENCE [LARGE SCALE MRNA]</scope>
    <source>
        <tissue>Kidney</tissue>
    </source>
</reference>